<reference key="1">
    <citation type="journal article" date="2001" name="Nature">
        <title>Complete genome sequence of Salmonella enterica serovar Typhimurium LT2.</title>
        <authorList>
            <person name="McClelland M."/>
            <person name="Sanderson K.E."/>
            <person name="Spieth J."/>
            <person name="Clifton S.W."/>
            <person name="Latreille P."/>
            <person name="Courtney L."/>
            <person name="Porwollik S."/>
            <person name="Ali J."/>
            <person name="Dante M."/>
            <person name="Du F."/>
            <person name="Hou S."/>
            <person name="Layman D."/>
            <person name="Leonard S."/>
            <person name="Nguyen C."/>
            <person name="Scott K."/>
            <person name="Holmes A."/>
            <person name="Grewal N."/>
            <person name="Mulvaney E."/>
            <person name="Ryan E."/>
            <person name="Sun H."/>
            <person name="Florea L."/>
            <person name="Miller W."/>
            <person name="Stoneking T."/>
            <person name="Nhan M."/>
            <person name="Waterston R."/>
            <person name="Wilson R.K."/>
        </authorList>
    </citation>
    <scope>NUCLEOTIDE SEQUENCE [LARGE SCALE GENOMIC DNA]</scope>
    <source>
        <strain>LT2 / SGSC1412 / ATCC 700720</strain>
    </source>
</reference>
<sequence>MTFKDFDAEEKLFLRRVIVAFGVVVVCFGILIFNLYNLQIRQHHYYTTRSNENDIKMLPVAPTRGIIYDRNGIPLVRNVTWYDIAVTPYKIADMDALLKQLTPIVDLSPDDISDFRRALKSSSRYRPVVLKNALTDVEIARFAVNQFHFNGVTINSYQDRQYPYGAELAHVLGYVSKINDNDLKALDKKGLAENYAADHNIGKQGIERYYENDLHGKTGYQEVEVDNHGRIVRLLKDVPPIAGKNIHLTLDLHLQEYIESLLAGQRAAVLVEDPHDGSVLAMVSMPSYDPNPFVKGISYQDYGKLLHDKNLPLINRVTQGLYPPASTVKPYMAMSALLCGIITPQTTFFGAPTWTLPGTQRHYRDWKKTGHGMLDVTKAIEESADTFFYQVAYMMGIDRIDTMLSQFGYGKPTGIDLNEEYDGLLPSRAWKQRVHKKAWYQGDTISVGIGQGYWIATPIQMVKAMVALINNGKVIAPHLLLNEESGKTVVPYRPSGTPAQIADPASPYWGLVRQAMYGMANAPNGTGYKFFHTAPYGIAAKSGTSQVFSLKENQTYNAKMIPIRLRDHVFYTAFAPYKNPKVAIALILENGGSDGVTAAPIMRKILDHLFDPQADTTQPDQAP</sequence>
<gene>
    <name evidence="1" type="primary">mrdA</name>
    <name type="synonym">pbpA</name>
    <name type="ordered locus">STM1910</name>
</gene>
<accession>P0CL14</accession>
<accession>P74872</accession>
<keyword id="KW-0121">Carboxypeptidase</keyword>
<keyword id="KW-0997">Cell inner membrane</keyword>
<keyword id="KW-1003">Cell membrane</keyword>
<keyword id="KW-0133">Cell shape</keyword>
<keyword id="KW-0961">Cell wall biogenesis/degradation</keyword>
<keyword id="KW-0378">Hydrolase</keyword>
<keyword id="KW-0472">Membrane</keyword>
<keyword id="KW-0573">Peptidoglycan synthesis</keyword>
<keyword id="KW-0645">Protease</keyword>
<keyword id="KW-1185">Reference proteome</keyword>
<keyword id="KW-0812">Transmembrane</keyword>
<keyword id="KW-1133">Transmembrane helix</keyword>
<protein>
    <recommendedName>
        <fullName evidence="1">Peptidoglycan D,D-transpeptidase MrdA</fullName>
        <ecNumber evidence="1">3.4.16.4</ecNumber>
    </recommendedName>
    <alternativeName>
        <fullName evidence="1">Penicillin-binding protein 2</fullName>
        <shortName evidence="1">PBP-2</shortName>
    </alternativeName>
</protein>
<organism>
    <name type="scientific">Salmonella typhimurium (strain LT2 / SGSC1412 / ATCC 700720)</name>
    <dbReference type="NCBI Taxonomy" id="99287"/>
    <lineage>
        <taxon>Bacteria</taxon>
        <taxon>Pseudomonadati</taxon>
        <taxon>Pseudomonadota</taxon>
        <taxon>Gammaproteobacteria</taxon>
        <taxon>Enterobacterales</taxon>
        <taxon>Enterobacteriaceae</taxon>
        <taxon>Salmonella</taxon>
    </lineage>
</organism>
<proteinExistence type="inferred from homology"/>
<name>MRDA_SALTY</name>
<dbReference type="EC" id="3.4.16.4" evidence="1"/>
<dbReference type="EMBL" id="AE006468">
    <property type="protein sequence ID" value="AAL20826.1"/>
    <property type="molecule type" value="Genomic_DNA"/>
</dbReference>
<dbReference type="RefSeq" id="NP_460867.1">
    <property type="nucleotide sequence ID" value="NC_003197.2"/>
</dbReference>
<dbReference type="RefSeq" id="WP_000142877.1">
    <property type="nucleotide sequence ID" value="NC_003197.2"/>
</dbReference>
<dbReference type="SMR" id="P0CL14"/>
<dbReference type="STRING" id="99287.STM1910"/>
<dbReference type="PaxDb" id="99287-STM1910"/>
<dbReference type="GeneID" id="1253431"/>
<dbReference type="KEGG" id="stm:STM1910"/>
<dbReference type="PATRIC" id="fig|99287.12.peg.2026"/>
<dbReference type="HOGENOM" id="CLU_009289_1_2_6"/>
<dbReference type="OMA" id="DPQIVVY"/>
<dbReference type="PhylomeDB" id="P0CL14"/>
<dbReference type="BioCyc" id="SENT99287:STM1910-MONOMER"/>
<dbReference type="UniPathway" id="UPA00219"/>
<dbReference type="Proteomes" id="UP000001014">
    <property type="component" value="Chromosome"/>
</dbReference>
<dbReference type="GO" id="GO:0005886">
    <property type="term" value="C:plasma membrane"/>
    <property type="evidence" value="ECO:0000318"/>
    <property type="project" value="GO_Central"/>
</dbReference>
<dbReference type="GO" id="GO:0008658">
    <property type="term" value="F:penicillin binding"/>
    <property type="evidence" value="ECO:0000318"/>
    <property type="project" value="GO_Central"/>
</dbReference>
<dbReference type="GO" id="GO:0071972">
    <property type="term" value="F:peptidoglycan L,D-transpeptidase activity"/>
    <property type="evidence" value="ECO:0000318"/>
    <property type="project" value="GO_Central"/>
</dbReference>
<dbReference type="GO" id="GO:0009002">
    <property type="term" value="F:serine-type D-Ala-D-Ala carboxypeptidase activity"/>
    <property type="evidence" value="ECO:0007669"/>
    <property type="project" value="UniProtKB-UniRule"/>
</dbReference>
<dbReference type="GO" id="GO:0071555">
    <property type="term" value="P:cell wall organization"/>
    <property type="evidence" value="ECO:0000318"/>
    <property type="project" value="GO_Central"/>
</dbReference>
<dbReference type="GO" id="GO:0009252">
    <property type="term" value="P:peptidoglycan biosynthetic process"/>
    <property type="evidence" value="ECO:0007669"/>
    <property type="project" value="UniProtKB-UniRule"/>
</dbReference>
<dbReference type="GO" id="GO:0006508">
    <property type="term" value="P:proteolysis"/>
    <property type="evidence" value="ECO:0007669"/>
    <property type="project" value="UniProtKB-KW"/>
</dbReference>
<dbReference type="GO" id="GO:0008360">
    <property type="term" value="P:regulation of cell shape"/>
    <property type="evidence" value="ECO:0007669"/>
    <property type="project" value="UniProtKB-KW"/>
</dbReference>
<dbReference type="FunFam" id="3.40.710.10:FF:000004">
    <property type="entry name" value="Peptidoglycan D,D-transpeptidase MrdA"/>
    <property type="match status" value="1"/>
</dbReference>
<dbReference type="FunFam" id="3.90.1310.10:FF:000001">
    <property type="entry name" value="Peptidoglycan D,D-transpeptidase MrdA"/>
    <property type="match status" value="1"/>
</dbReference>
<dbReference type="Gene3D" id="3.40.710.10">
    <property type="entry name" value="DD-peptidase/beta-lactamase superfamily"/>
    <property type="match status" value="1"/>
</dbReference>
<dbReference type="Gene3D" id="3.90.1310.10">
    <property type="entry name" value="Penicillin-binding protein 2a (Domain 2)"/>
    <property type="match status" value="1"/>
</dbReference>
<dbReference type="Gene3D" id="3.30.1390.30">
    <property type="entry name" value="Penicillin-binding protein 2a, domain 3"/>
    <property type="match status" value="1"/>
</dbReference>
<dbReference type="HAMAP" id="MF_02081">
    <property type="entry name" value="MrdA_transpept"/>
    <property type="match status" value="1"/>
</dbReference>
<dbReference type="InterPro" id="IPR050515">
    <property type="entry name" value="Bact_Transpept/Beta-Lactamase"/>
</dbReference>
<dbReference type="InterPro" id="IPR012338">
    <property type="entry name" value="Beta-lactam/transpept-like"/>
</dbReference>
<dbReference type="InterPro" id="IPR005311">
    <property type="entry name" value="PBP_dimer"/>
</dbReference>
<dbReference type="InterPro" id="IPR036138">
    <property type="entry name" value="PBP_dimer_sf"/>
</dbReference>
<dbReference type="InterPro" id="IPR001460">
    <property type="entry name" value="PCN-bd_Tpept"/>
</dbReference>
<dbReference type="InterPro" id="IPR017790">
    <property type="entry name" value="Penicillin-binding_protein_2"/>
</dbReference>
<dbReference type="NCBIfam" id="TIGR03423">
    <property type="entry name" value="pbp2_mrdA"/>
    <property type="match status" value="1"/>
</dbReference>
<dbReference type="PANTHER" id="PTHR30627">
    <property type="entry name" value="PEPTIDOGLYCAN D,D-TRANSPEPTIDASE"/>
    <property type="match status" value="1"/>
</dbReference>
<dbReference type="PANTHER" id="PTHR30627:SF2">
    <property type="entry name" value="PEPTIDOGLYCAN D,D-TRANSPEPTIDASE MRDA"/>
    <property type="match status" value="1"/>
</dbReference>
<dbReference type="Pfam" id="PF03717">
    <property type="entry name" value="PBP_dimer"/>
    <property type="match status" value="1"/>
</dbReference>
<dbReference type="Pfam" id="PF00905">
    <property type="entry name" value="Transpeptidase"/>
    <property type="match status" value="1"/>
</dbReference>
<dbReference type="SUPFAM" id="SSF56601">
    <property type="entry name" value="beta-lactamase/transpeptidase-like"/>
    <property type="match status" value="1"/>
</dbReference>
<dbReference type="SUPFAM" id="SSF56519">
    <property type="entry name" value="Penicillin binding protein dimerisation domain"/>
    <property type="match status" value="1"/>
</dbReference>
<comment type="function">
    <text evidence="1">Catalyzes cross-linking of the peptidoglycan cell wall.</text>
</comment>
<comment type="catalytic activity">
    <reaction evidence="1">
        <text>Preferential cleavage: (Ac)2-L-Lys-D-Ala-|-D-Ala. Also transpeptidation of peptidyl-alanyl moieties that are N-acyl substituents of D-alanine.</text>
        <dbReference type="EC" id="3.4.16.4"/>
    </reaction>
</comment>
<comment type="pathway">
    <text evidence="1">Cell wall biogenesis; peptidoglycan biosynthesis.</text>
</comment>
<comment type="subcellular location">
    <subcellularLocation>
        <location evidence="1">Cell inner membrane</location>
        <topology evidence="1">Single-pass membrane protein</topology>
    </subcellularLocation>
</comment>
<comment type="similarity">
    <text evidence="1">Belongs to the transpeptidase family. MrdA subfamily.</text>
</comment>
<evidence type="ECO:0000255" key="1">
    <source>
        <dbReference type="HAMAP-Rule" id="MF_02081"/>
    </source>
</evidence>
<feature type="chain" id="PRO_0000195447" description="Peptidoglycan D,D-transpeptidase MrdA">
    <location>
        <begin position="1"/>
        <end position="623"/>
    </location>
</feature>
<feature type="transmembrane region" description="Helical" evidence="1">
    <location>
        <begin position="17"/>
        <end position="37"/>
    </location>
</feature>
<feature type="active site" description="Acyl-ester intermediate" evidence="1">
    <location>
        <position position="326"/>
    </location>
</feature>